<feature type="chain" id="PRO_0000452933" description="Oxidase hkm6">
    <location>
        <begin position="1"/>
        <end position="286"/>
    </location>
</feature>
<feature type="binding site" evidence="1">
    <location>
        <position position="16"/>
    </location>
    <ligand>
        <name>Cu cation</name>
        <dbReference type="ChEBI" id="CHEBI:23378"/>
        <label>A</label>
    </ligand>
</feature>
<feature type="binding site" evidence="1">
    <location>
        <position position="25"/>
    </location>
    <ligand>
        <name>Cu cation</name>
        <dbReference type="ChEBI" id="CHEBI:23378"/>
        <label>A</label>
    </ligand>
</feature>
<feature type="binding site" evidence="1">
    <location>
        <position position="215"/>
    </location>
    <ligand>
        <name>Cu cation</name>
        <dbReference type="ChEBI" id="CHEBI:23378"/>
        <label>B</label>
    </ligand>
</feature>
<protein>
    <recommendedName>
        <fullName evidence="3">Oxidase hkm6</fullName>
        <ecNumber evidence="5">1.14.-.-</ecNumber>
    </recommendedName>
    <alternativeName>
        <fullName evidence="3">Hancockiamides biosynthesis cluster protein 6</fullName>
    </alternativeName>
</protein>
<dbReference type="EC" id="1.14.-.-" evidence="5"/>
<dbReference type="EMBL" id="MBFL02000005">
    <property type="protein sequence ID" value="KAF7597144.1"/>
    <property type="molecule type" value="Genomic_DNA"/>
</dbReference>
<dbReference type="SMR" id="P0DUQ0"/>
<dbReference type="OrthoDB" id="6132182at2759"/>
<dbReference type="GO" id="GO:0046872">
    <property type="term" value="F:metal ion binding"/>
    <property type="evidence" value="ECO:0007669"/>
    <property type="project" value="UniProtKB-KW"/>
</dbReference>
<dbReference type="GO" id="GO:0004497">
    <property type="term" value="F:monooxygenase activity"/>
    <property type="evidence" value="ECO:0007669"/>
    <property type="project" value="UniProtKB-KW"/>
</dbReference>
<dbReference type="Gene3D" id="1.10.1280.10">
    <property type="entry name" value="Di-copper center containing domain from catechol oxidase"/>
    <property type="match status" value="1"/>
</dbReference>
<dbReference type="InterPro" id="IPR008922">
    <property type="entry name" value="Di-copper_centre_dom_sf"/>
</dbReference>
<dbReference type="InterPro" id="IPR050316">
    <property type="entry name" value="Tyrosinase/Hemocyanin"/>
</dbReference>
<dbReference type="InterPro" id="IPR002227">
    <property type="entry name" value="Tyrosinase_Cu-bd"/>
</dbReference>
<dbReference type="PANTHER" id="PTHR11474:SF125">
    <property type="entry name" value="N-ACETYL-6-HYDROXYTRYPTOPHAN OXIDASE IVOB-RELATED"/>
    <property type="match status" value="1"/>
</dbReference>
<dbReference type="PANTHER" id="PTHR11474">
    <property type="entry name" value="TYROSINASE FAMILY MEMBER"/>
    <property type="match status" value="1"/>
</dbReference>
<dbReference type="Pfam" id="PF00264">
    <property type="entry name" value="Tyrosinase"/>
    <property type="match status" value="1"/>
</dbReference>
<dbReference type="PRINTS" id="PR00092">
    <property type="entry name" value="TYROSINASE"/>
</dbReference>
<dbReference type="SUPFAM" id="SSF48056">
    <property type="entry name" value="Di-copper centre-containing domain"/>
    <property type="match status" value="1"/>
</dbReference>
<dbReference type="PROSITE" id="PS00497">
    <property type="entry name" value="TYROSINASE_1"/>
    <property type="match status" value="1"/>
</dbReference>
<dbReference type="PROSITE" id="PS00498">
    <property type="entry name" value="TYROSINASE_2"/>
    <property type="match status" value="1"/>
</dbReference>
<sequence>MDDFSATHINYTLSIHLSGIFFAWHRHFVWLWERTLREECGYNGYQPYWDWALSANNISASPIFDGSPTSLSGNGDPINQEPFLQLEPTNITIPTGTGGGCVTNGPFANMTLNLPDLSMAGDEEFPSNAFDYKPHCFTRNLNSHMSSAFTSQADVDRLLNSPSITDLQANIDFSAWPELREARILGPHAAAHMSLGRTMDDFWTAPQDPSFMLHHAQVDRIWSLWQARGPESRRWALNGTSTINNRPTSPEVTLDTELVWGSLSESKTMREVMSTEAYHFCYEYGA</sequence>
<comment type="function">
    <text evidence="2 5">Oxidase; part of the gene cluster that mediates the biosynthesis of hancockiamides, an unusual new family of N-cinnamoylated piperazines (PubMed:33242032). The NRPS hkm10 and the NmrA-like reductase hkm9 are proposed to convert two molecules of L-Phe to the intermediary piperazine called xenocockiamide A (Probable). Xenocockiamide A is then converted to hancockiamide D via a series of hydroxylations and O-methylations (Probable). The tyrosinase hkm6 may catalyze an aromatic hydroxylation, then the 2-oxoglutarate-dependent Fe(II) dioxygenase hkm4 and the FAD-dependent phenol hydroxylase hkm7 may catalyze consecutive hydroxylations to install 2 more hydroxy groups, and the methyltransferase hkm8 probably catalyzes two methylations using 2 molecules of S-adenosyl-L-methionine (SAM) (Probable). The NRPS hkm11 activates and transfers trans-cinnamate supplied by the PAL hkm12 to hancockiamide D and produces hancockiamide A (PubMed:33242032). NRPS Hkm11 has the flexibility to tolerate the bulky hancockiamide G as a substrate and the absence of the acetyl-transferase hkm3 opens up the opportunity for hkm11 to introduce a second N-cinnamoyl moiety (PubMed:33242032). The cytochrome P450 monooxygenase hkm5 catalyzes the methylenedioxy bridge formation, converting hancockiamide A into hancockiamide G (PubMed:33242032). Hkm5 can also convert hancockiamide B into hancockiamide C, and hancockiamide D into hancockiamide H (PubMed:33242032). The N-acetyltransferase hkm3 finally transfers an acetyl group to 1-N of piperazine, converting hancockiamide A into hancockiamide B and hancockiamide G into hancockiamide C (PubMed:33242032).</text>
</comment>
<comment type="cofactor">
    <cofactor evidence="1">
        <name>Cu(2+)</name>
        <dbReference type="ChEBI" id="CHEBI:29036"/>
    </cofactor>
    <text evidence="1">Binds 2 copper ions per subunit.</text>
</comment>
<comment type="pathway">
    <text evidence="5">Secondary metabolite biosynthesis.</text>
</comment>
<comment type="biotechnology">
    <text evidence="2">Hancockiamide D displays potent cytotoxic activity against murine myeloma NS-1 cells, suggesting a potential antitumour application (PubMed:33242032). More interestingly, hancockiamide C, the likely end metabolite of the hkm pathway, shows potent Arabidopsis thaliana seed anti-germination activity, but is inactive against the monocot Eragrostis tef seed, suggesting that it could be a herbicidal lead targeting monocots (PubMed:33242032). The herbicidal activity of hancockiamide C could be due to its phenylpropanoid-like structural features, which may act on the plant lignan pathways, and hence warrants further investigations (PubMed:33242032).</text>
</comment>
<comment type="similarity">
    <text evidence="4">Belongs to the tyrosinase family.</text>
</comment>
<reference key="1">
    <citation type="submission" date="2019-04" db="EMBL/GenBank/DDBJ databases">
        <authorList>
            <person name="Gilchrist C.L.M."/>
            <person name="Chooi Y.H."/>
        </authorList>
    </citation>
    <scope>NUCLEOTIDE SEQUENCE [LARGE SCALE GENOMIC DNA]</scope>
    <source>
        <strain>FRR 3425 / CBS 142004 / DTO 360-G7</strain>
    </source>
</reference>
<reference key="2">
    <citation type="journal article" date="2021" name="Org. Biomol. Chem.">
        <title>Hancockiamides: phenylpropanoid piperazines from Aspergillus hancockii are biosynthesised by a versatile dual single-module NRPS pathway.</title>
        <authorList>
            <person name="Li H."/>
            <person name="Lacey A.E."/>
            <person name="Shu S."/>
            <person name="Kalaitzis J.A."/>
            <person name="Vuong D."/>
            <person name="Crombie A."/>
            <person name="Hu J."/>
            <person name="Gilchrist C.L.M."/>
            <person name="Lacey E."/>
            <person name="Piggott A.M."/>
            <person name="Chooi Y.H."/>
        </authorList>
    </citation>
    <scope>FUNCTION</scope>
    <scope>PATHWAY</scope>
    <scope>BIOTECHNOLOGY</scope>
</reference>
<keyword id="KW-0186">Copper</keyword>
<keyword id="KW-0479">Metal-binding</keyword>
<keyword id="KW-0503">Monooxygenase</keyword>
<keyword id="KW-0560">Oxidoreductase</keyword>
<proteinExistence type="evidence at protein level"/>
<organism>
    <name type="scientific">Aspergillus hancockii</name>
    <dbReference type="NCBI Taxonomy" id="1873369"/>
    <lineage>
        <taxon>Eukaryota</taxon>
        <taxon>Fungi</taxon>
        <taxon>Dikarya</taxon>
        <taxon>Ascomycota</taxon>
        <taxon>Pezizomycotina</taxon>
        <taxon>Eurotiomycetes</taxon>
        <taxon>Eurotiomycetidae</taxon>
        <taxon>Eurotiales</taxon>
        <taxon>Aspergillaceae</taxon>
        <taxon>Aspergillus</taxon>
        <taxon>Aspergillus subgen. Circumdati</taxon>
    </lineage>
</organism>
<name>HKM6_ASPHA</name>
<evidence type="ECO:0000250" key="1">
    <source>
        <dbReference type="UniProtKB" id="Q9ZP19"/>
    </source>
</evidence>
<evidence type="ECO:0000269" key="2">
    <source>
    </source>
</evidence>
<evidence type="ECO:0000303" key="3">
    <source>
    </source>
</evidence>
<evidence type="ECO:0000305" key="4"/>
<evidence type="ECO:0000305" key="5">
    <source>
    </source>
</evidence>
<accession>P0DUQ0</accession>